<name>PIMT_SHESW</name>
<reference key="1">
    <citation type="submission" date="2006-12" db="EMBL/GenBank/DDBJ databases">
        <title>Complete sequence of Shewanella sp. W3-18-1.</title>
        <authorList>
            <consortium name="US DOE Joint Genome Institute"/>
            <person name="Copeland A."/>
            <person name="Lucas S."/>
            <person name="Lapidus A."/>
            <person name="Barry K."/>
            <person name="Detter J.C."/>
            <person name="Glavina del Rio T."/>
            <person name="Hammon N."/>
            <person name="Israni S."/>
            <person name="Dalin E."/>
            <person name="Tice H."/>
            <person name="Pitluck S."/>
            <person name="Chain P."/>
            <person name="Malfatti S."/>
            <person name="Shin M."/>
            <person name="Vergez L."/>
            <person name="Schmutz J."/>
            <person name="Larimer F."/>
            <person name="Land M."/>
            <person name="Hauser L."/>
            <person name="Kyrpides N."/>
            <person name="Lykidis A."/>
            <person name="Tiedje J."/>
            <person name="Richardson P."/>
        </authorList>
    </citation>
    <scope>NUCLEOTIDE SEQUENCE [LARGE SCALE GENOMIC DNA]</scope>
    <source>
        <strain>W3-18-1</strain>
    </source>
</reference>
<comment type="function">
    <text evidence="1">Catalyzes the methyl esterification of L-isoaspartyl residues in peptides and proteins that result from spontaneous decomposition of normal L-aspartyl and L-asparaginyl residues. It plays a role in the repair and/or degradation of damaged proteins.</text>
</comment>
<comment type="catalytic activity">
    <reaction evidence="1">
        <text>[protein]-L-isoaspartate + S-adenosyl-L-methionine = [protein]-L-isoaspartate alpha-methyl ester + S-adenosyl-L-homocysteine</text>
        <dbReference type="Rhea" id="RHEA:12705"/>
        <dbReference type="Rhea" id="RHEA-COMP:12143"/>
        <dbReference type="Rhea" id="RHEA-COMP:12144"/>
        <dbReference type="ChEBI" id="CHEBI:57856"/>
        <dbReference type="ChEBI" id="CHEBI:59789"/>
        <dbReference type="ChEBI" id="CHEBI:90596"/>
        <dbReference type="ChEBI" id="CHEBI:90598"/>
        <dbReference type="EC" id="2.1.1.77"/>
    </reaction>
</comment>
<comment type="subcellular location">
    <subcellularLocation>
        <location evidence="1">Cytoplasm</location>
    </subcellularLocation>
</comment>
<comment type="similarity">
    <text evidence="1">Belongs to the methyltransferase superfamily. L-isoaspartyl/D-aspartyl protein methyltransferase family.</text>
</comment>
<sequence>MTRVALTSAVNLAKKLSDAGIRNQAVLKAISQTPREMFLDNALAHKAYENTALPIGQGQTISQPYIVARMTELLLSNMPKKVLEVGTGSGYQAAILAQLVPELCTIERIKGLQIQARQRLKRLDLHNVSFKYGDGWQGWSNRSPFDAIMVTAAAATVPEALLSQLVDGGVLVLPVGENTQQLMRITRHRERFSSENIETVKFVPLVNGELA</sequence>
<dbReference type="EC" id="2.1.1.77" evidence="1"/>
<dbReference type="EMBL" id="CP000503">
    <property type="protein sequence ID" value="ABM24104.1"/>
    <property type="molecule type" value="Genomic_DNA"/>
</dbReference>
<dbReference type="RefSeq" id="WP_011788611.1">
    <property type="nucleotide sequence ID" value="NC_008750.1"/>
</dbReference>
<dbReference type="SMR" id="A1RHF9"/>
<dbReference type="KEGG" id="shw:Sputw3181_1261"/>
<dbReference type="HOGENOM" id="CLU_055432_2_0_6"/>
<dbReference type="Proteomes" id="UP000002597">
    <property type="component" value="Chromosome"/>
</dbReference>
<dbReference type="GO" id="GO:0005737">
    <property type="term" value="C:cytoplasm"/>
    <property type="evidence" value="ECO:0007669"/>
    <property type="project" value="UniProtKB-SubCell"/>
</dbReference>
<dbReference type="GO" id="GO:0004719">
    <property type="term" value="F:protein-L-isoaspartate (D-aspartate) O-methyltransferase activity"/>
    <property type="evidence" value="ECO:0007669"/>
    <property type="project" value="UniProtKB-UniRule"/>
</dbReference>
<dbReference type="GO" id="GO:0032259">
    <property type="term" value="P:methylation"/>
    <property type="evidence" value="ECO:0007669"/>
    <property type="project" value="UniProtKB-KW"/>
</dbReference>
<dbReference type="GO" id="GO:0036211">
    <property type="term" value="P:protein modification process"/>
    <property type="evidence" value="ECO:0007669"/>
    <property type="project" value="UniProtKB-UniRule"/>
</dbReference>
<dbReference type="GO" id="GO:0030091">
    <property type="term" value="P:protein repair"/>
    <property type="evidence" value="ECO:0007669"/>
    <property type="project" value="UniProtKB-UniRule"/>
</dbReference>
<dbReference type="CDD" id="cd02440">
    <property type="entry name" value="AdoMet_MTases"/>
    <property type="match status" value="1"/>
</dbReference>
<dbReference type="FunFam" id="3.40.50.150:FF:000010">
    <property type="entry name" value="Protein-L-isoaspartate O-methyltransferase"/>
    <property type="match status" value="1"/>
</dbReference>
<dbReference type="Gene3D" id="3.40.50.150">
    <property type="entry name" value="Vaccinia Virus protein VP39"/>
    <property type="match status" value="1"/>
</dbReference>
<dbReference type="HAMAP" id="MF_00090">
    <property type="entry name" value="PIMT"/>
    <property type="match status" value="1"/>
</dbReference>
<dbReference type="InterPro" id="IPR000682">
    <property type="entry name" value="PCMT"/>
</dbReference>
<dbReference type="InterPro" id="IPR029063">
    <property type="entry name" value="SAM-dependent_MTases_sf"/>
</dbReference>
<dbReference type="NCBIfam" id="TIGR00080">
    <property type="entry name" value="pimt"/>
    <property type="match status" value="1"/>
</dbReference>
<dbReference type="NCBIfam" id="NF001453">
    <property type="entry name" value="PRK00312.1"/>
    <property type="match status" value="1"/>
</dbReference>
<dbReference type="PANTHER" id="PTHR11579">
    <property type="entry name" value="PROTEIN-L-ISOASPARTATE O-METHYLTRANSFERASE"/>
    <property type="match status" value="1"/>
</dbReference>
<dbReference type="PANTHER" id="PTHR11579:SF0">
    <property type="entry name" value="PROTEIN-L-ISOASPARTATE(D-ASPARTATE) O-METHYLTRANSFERASE"/>
    <property type="match status" value="1"/>
</dbReference>
<dbReference type="Pfam" id="PF01135">
    <property type="entry name" value="PCMT"/>
    <property type="match status" value="1"/>
</dbReference>
<dbReference type="SUPFAM" id="SSF53335">
    <property type="entry name" value="S-adenosyl-L-methionine-dependent methyltransferases"/>
    <property type="match status" value="1"/>
</dbReference>
<dbReference type="PROSITE" id="PS01279">
    <property type="entry name" value="PCMT"/>
    <property type="match status" value="1"/>
</dbReference>
<accession>A1RHF9</accession>
<evidence type="ECO:0000255" key="1">
    <source>
        <dbReference type="HAMAP-Rule" id="MF_00090"/>
    </source>
</evidence>
<gene>
    <name evidence="1" type="primary">pcm</name>
    <name type="ordered locus">Sputw3181_1261</name>
</gene>
<keyword id="KW-0963">Cytoplasm</keyword>
<keyword id="KW-0489">Methyltransferase</keyword>
<keyword id="KW-0949">S-adenosyl-L-methionine</keyword>
<keyword id="KW-0808">Transferase</keyword>
<protein>
    <recommendedName>
        <fullName evidence="1">Protein-L-isoaspartate O-methyltransferase</fullName>
        <ecNumber evidence="1">2.1.1.77</ecNumber>
    </recommendedName>
    <alternativeName>
        <fullName evidence="1">L-isoaspartyl protein carboxyl methyltransferase</fullName>
    </alternativeName>
    <alternativeName>
        <fullName evidence="1">Protein L-isoaspartyl methyltransferase</fullName>
    </alternativeName>
    <alternativeName>
        <fullName evidence="1">Protein-beta-aspartate methyltransferase</fullName>
        <shortName evidence="1">PIMT</shortName>
    </alternativeName>
</protein>
<organism>
    <name type="scientific">Shewanella sp. (strain W3-18-1)</name>
    <dbReference type="NCBI Taxonomy" id="351745"/>
    <lineage>
        <taxon>Bacteria</taxon>
        <taxon>Pseudomonadati</taxon>
        <taxon>Pseudomonadota</taxon>
        <taxon>Gammaproteobacteria</taxon>
        <taxon>Alteromonadales</taxon>
        <taxon>Shewanellaceae</taxon>
        <taxon>Shewanella</taxon>
    </lineage>
</organism>
<feature type="chain" id="PRO_1000093292" description="Protein-L-isoaspartate O-methyltransferase">
    <location>
        <begin position="1"/>
        <end position="211"/>
    </location>
</feature>
<feature type="active site" evidence="1">
    <location>
        <position position="62"/>
    </location>
</feature>
<proteinExistence type="inferred from homology"/>